<name>APT_ARTS2</name>
<gene>
    <name evidence="1" type="primary">apt</name>
    <name type="ordered locus">Arth_1509</name>
</gene>
<comment type="function">
    <text evidence="1">Catalyzes a salvage reaction resulting in the formation of AMP, that is energically less costly than de novo synthesis.</text>
</comment>
<comment type="catalytic activity">
    <reaction evidence="1">
        <text>AMP + diphosphate = 5-phospho-alpha-D-ribose 1-diphosphate + adenine</text>
        <dbReference type="Rhea" id="RHEA:16609"/>
        <dbReference type="ChEBI" id="CHEBI:16708"/>
        <dbReference type="ChEBI" id="CHEBI:33019"/>
        <dbReference type="ChEBI" id="CHEBI:58017"/>
        <dbReference type="ChEBI" id="CHEBI:456215"/>
        <dbReference type="EC" id="2.4.2.7"/>
    </reaction>
</comment>
<comment type="pathway">
    <text evidence="1">Purine metabolism; AMP biosynthesis via salvage pathway; AMP from adenine: step 1/1.</text>
</comment>
<comment type="subunit">
    <text evidence="1">Homodimer.</text>
</comment>
<comment type="subcellular location">
    <subcellularLocation>
        <location evidence="1">Cytoplasm</location>
    </subcellularLocation>
</comment>
<comment type="similarity">
    <text evidence="1">Belongs to the purine/pyrimidine phosphoribosyltransferase family.</text>
</comment>
<evidence type="ECO:0000255" key="1">
    <source>
        <dbReference type="HAMAP-Rule" id="MF_00004"/>
    </source>
</evidence>
<reference key="1">
    <citation type="journal article" date="2013" name="Stand. Genomic Sci.">
        <title>Complete genome sequence of Arthrobacter sp. strain FB24.</title>
        <authorList>
            <person name="Nakatsu C.H."/>
            <person name="Barabote R."/>
            <person name="Thompson S."/>
            <person name="Bruce D."/>
            <person name="Detter C."/>
            <person name="Brettin T."/>
            <person name="Han C."/>
            <person name="Beasley F."/>
            <person name="Chen W."/>
            <person name="Konopka A."/>
            <person name="Xie G."/>
        </authorList>
    </citation>
    <scope>NUCLEOTIDE SEQUENCE [LARGE SCALE GENOMIC DNA]</scope>
    <source>
        <strain>FB24</strain>
    </source>
</reference>
<keyword id="KW-0963">Cytoplasm</keyword>
<keyword id="KW-0328">Glycosyltransferase</keyword>
<keyword id="KW-0660">Purine salvage</keyword>
<keyword id="KW-1185">Reference proteome</keyword>
<keyword id="KW-0808">Transferase</keyword>
<proteinExistence type="inferred from homology"/>
<feature type="chain" id="PRO_0000321337" description="Adenine phosphoribosyltransferase">
    <location>
        <begin position="1"/>
        <end position="185"/>
    </location>
</feature>
<protein>
    <recommendedName>
        <fullName evidence="1">Adenine phosphoribosyltransferase</fullName>
        <shortName evidence="1">APRT</shortName>
        <ecNumber evidence="1">2.4.2.7</ecNumber>
    </recommendedName>
</protein>
<organism>
    <name type="scientific">Arthrobacter sp. (strain FB24)</name>
    <dbReference type="NCBI Taxonomy" id="290399"/>
    <lineage>
        <taxon>Bacteria</taxon>
        <taxon>Bacillati</taxon>
        <taxon>Actinomycetota</taxon>
        <taxon>Actinomycetes</taxon>
        <taxon>Micrococcales</taxon>
        <taxon>Micrococcaceae</taxon>
        <taxon>Arthrobacter</taxon>
    </lineage>
</organism>
<sequence>MNQSEPGQTRRSVPVDQLINSLCATVPDYPKPGIIFKDLTPVFANGAALRAVVDALVEPFKGQFDAVAGVEARGFLLAAAAAYATDTGVITVRKAGKLPRKVISEDYALEYGTATLELHTADLPAGSRVLILDDVLATGGTLGAAARLFERCGVHVAGVGVVMELGELRGRSALTGHRVRSLLRL</sequence>
<dbReference type="EC" id="2.4.2.7" evidence="1"/>
<dbReference type="EMBL" id="CP000454">
    <property type="protein sequence ID" value="ABK02903.1"/>
    <property type="molecule type" value="Genomic_DNA"/>
</dbReference>
<dbReference type="RefSeq" id="WP_011691369.1">
    <property type="nucleotide sequence ID" value="NC_008541.1"/>
</dbReference>
<dbReference type="SMR" id="A0JV33"/>
<dbReference type="STRING" id="290399.Arth_1509"/>
<dbReference type="KEGG" id="art:Arth_1509"/>
<dbReference type="eggNOG" id="COG0503">
    <property type="taxonomic scope" value="Bacteria"/>
</dbReference>
<dbReference type="HOGENOM" id="CLU_063339_3_0_11"/>
<dbReference type="OrthoDB" id="9803963at2"/>
<dbReference type="UniPathway" id="UPA00588">
    <property type="reaction ID" value="UER00646"/>
</dbReference>
<dbReference type="Proteomes" id="UP000000754">
    <property type="component" value="Chromosome"/>
</dbReference>
<dbReference type="GO" id="GO:0005737">
    <property type="term" value="C:cytoplasm"/>
    <property type="evidence" value="ECO:0007669"/>
    <property type="project" value="UniProtKB-SubCell"/>
</dbReference>
<dbReference type="GO" id="GO:0002055">
    <property type="term" value="F:adenine binding"/>
    <property type="evidence" value="ECO:0007669"/>
    <property type="project" value="TreeGrafter"/>
</dbReference>
<dbReference type="GO" id="GO:0003999">
    <property type="term" value="F:adenine phosphoribosyltransferase activity"/>
    <property type="evidence" value="ECO:0007669"/>
    <property type="project" value="UniProtKB-UniRule"/>
</dbReference>
<dbReference type="GO" id="GO:0016208">
    <property type="term" value="F:AMP binding"/>
    <property type="evidence" value="ECO:0007669"/>
    <property type="project" value="TreeGrafter"/>
</dbReference>
<dbReference type="GO" id="GO:0006168">
    <property type="term" value="P:adenine salvage"/>
    <property type="evidence" value="ECO:0007669"/>
    <property type="project" value="InterPro"/>
</dbReference>
<dbReference type="GO" id="GO:0044209">
    <property type="term" value="P:AMP salvage"/>
    <property type="evidence" value="ECO:0007669"/>
    <property type="project" value="UniProtKB-UniRule"/>
</dbReference>
<dbReference type="GO" id="GO:0006166">
    <property type="term" value="P:purine ribonucleoside salvage"/>
    <property type="evidence" value="ECO:0007669"/>
    <property type="project" value="UniProtKB-KW"/>
</dbReference>
<dbReference type="CDD" id="cd06223">
    <property type="entry name" value="PRTases_typeI"/>
    <property type="match status" value="1"/>
</dbReference>
<dbReference type="FunFam" id="3.40.50.2020:FF:000021">
    <property type="entry name" value="Adenine phosphoribosyltransferase"/>
    <property type="match status" value="1"/>
</dbReference>
<dbReference type="Gene3D" id="3.40.50.2020">
    <property type="match status" value="1"/>
</dbReference>
<dbReference type="HAMAP" id="MF_00004">
    <property type="entry name" value="Aden_phosphoribosyltr"/>
    <property type="match status" value="1"/>
</dbReference>
<dbReference type="InterPro" id="IPR005764">
    <property type="entry name" value="Ade_phspho_trans"/>
</dbReference>
<dbReference type="InterPro" id="IPR000836">
    <property type="entry name" value="PRibTrfase_dom"/>
</dbReference>
<dbReference type="InterPro" id="IPR029057">
    <property type="entry name" value="PRTase-like"/>
</dbReference>
<dbReference type="InterPro" id="IPR050054">
    <property type="entry name" value="UPRTase/APRTase"/>
</dbReference>
<dbReference type="NCBIfam" id="NF002634">
    <property type="entry name" value="PRK02304.1-3"/>
    <property type="match status" value="1"/>
</dbReference>
<dbReference type="NCBIfam" id="NF002636">
    <property type="entry name" value="PRK02304.1-5"/>
    <property type="match status" value="1"/>
</dbReference>
<dbReference type="PANTHER" id="PTHR32315">
    <property type="entry name" value="ADENINE PHOSPHORIBOSYLTRANSFERASE"/>
    <property type="match status" value="1"/>
</dbReference>
<dbReference type="PANTHER" id="PTHR32315:SF3">
    <property type="entry name" value="ADENINE PHOSPHORIBOSYLTRANSFERASE"/>
    <property type="match status" value="1"/>
</dbReference>
<dbReference type="Pfam" id="PF00156">
    <property type="entry name" value="Pribosyltran"/>
    <property type="match status" value="1"/>
</dbReference>
<dbReference type="SUPFAM" id="SSF53271">
    <property type="entry name" value="PRTase-like"/>
    <property type="match status" value="1"/>
</dbReference>
<dbReference type="PROSITE" id="PS00103">
    <property type="entry name" value="PUR_PYR_PR_TRANSFER"/>
    <property type="match status" value="1"/>
</dbReference>
<accession>A0JV33</accession>